<dbReference type="EMBL" id="BA000003">
    <property type="protein sequence ID" value="BAB13257.1"/>
    <property type="molecule type" value="Genomic_DNA"/>
</dbReference>
<dbReference type="RefSeq" id="NP_240371.1">
    <property type="nucleotide sequence ID" value="NC_002528.1"/>
</dbReference>
<dbReference type="RefSeq" id="WP_010896164.1">
    <property type="nucleotide sequence ID" value="NC_002528.1"/>
</dbReference>
<dbReference type="SMR" id="P57630"/>
<dbReference type="STRING" id="563178.BUAP5A_560"/>
<dbReference type="MEROPS" id="I87.001"/>
<dbReference type="EnsemblBacteria" id="BAB13257">
    <property type="protein sequence ID" value="BAB13257"/>
    <property type="gene ID" value="BAB13257"/>
</dbReference>
<dbReference type="KEGG" id="buc:BU567"/>
<dbReference type="PATRIC" id="fig|107806.10.peg.570"/>
<dbReference type="eggNOG" id="COG0330">
    <property type="taxonomic scope" value="Bacteria"/>
</dbReference>
<dbReference type="HOGENOM" id="CLU_059167_3_0_6"/>
<dbReference type="Proteomes" id="UP000001806">
    <property type="component" value="Chromosome"/>
</dbReference>
<dbReference type="GO" id="GO:0016020">
    <property type="term" value="C:membrane"/>
    <property type="evidence" value="ECO:0007669"/>
    <property type="project" value="UniProtKB-SubCell"/>
</dbReference>
<dbReference type="CDD" id="cd03405">
    <property type="entry name" value="SPFH_HflC"/>
    <property type="match status" value="1"/>
</dbReference>
<dbReference type="FunFam" id="3.30.479.30:FF:000005">
    <property type="entry name" value="Protease modulator HflC"/>
    <property type="match status" value="1"/>
</dbReference>
<dbReference type="Gene3D" id="3.30.479.30">
    <property type="entry name" value="Band 7 domain"/>
    <property type="match status" value="1"/>
</dbReference>
<dbReference type="InterPro" id="IPR001107">
    <property type="entry name" value="Band_7"/>
</dbReference>
<dbReference type="InterPro" id="IPR036013">
    <property type="entry name" value="Band_7/SPFH_dom_sf"/>
</dbReference>
<dbReference type="InterPro" id="IPR010200">
    <property type="entry name" value="HflC"/>
</dbReference>
<dbReference type="NCBIfam" id="TIGR01932">
    <property type="entry name" value="hflC"/>
    <property type="match status" value="1"/>
</dbReference>
<dbReference type="PANTHER" id="PTHR42911">
    <property type="entry name" value="MODULATOR OF FTSH PROTEASE HFLC"/>
    <property type="match status" value="1"/>
</dbReference>
<dbReference type="PANTHER" id="PTHR42911:SF1">
    <property type="entry name" value="MODULATOR OF FTSH PROTEASE HFLC"/>
    <property type="match status" value="1"/>
</dbReference>
<dbReference type="Pfam" id="PF01145">
    <property type="entry name" value="Band_7"/>
    <property type="match status" value="1"/>
</dbReference>
<dbReference type="PIRSF" id="PIRSF005651">
    <property type="entry name" value="HflC"/>
    <property type="match status" value="1"/>
</dbReference>
<dbReference type="SMART" id="SM00244">
    <property type="entry name" value="PHB"/>
    <property type="match status" value="1"/>
</dbReference>
<dbReference type="SUPFAM" id="SSF117892">
    <property type="entry name" value="Band 7/SPFH domain"/>
    <property type="match status" value="1"/>
</dbReference>
<protein>
    <recommendedName>
        <fullName>Protein HflC</fullName>
    </recommendedName>
</protein>
<gene>
    <name type="primary">hflC</name>
    <name type="ordered locus">BU567</name>
</gene>
<reference key="1">
    <citation type="journal article" date="2000" name="Nature">
        <title>Genome sequence of the endocellular bacterial symbiont of aphids Buchnera sp. APS.</title>
        <authorList>
            <person name="Shigenobu S."/>
            <person name="Watanabe H."/>
            <person name="Hattori M."/>
            <person name="Sakaki Y."/>
            <person name="Ishikawa H."/>
        </authorList>
    </citation>
    <scope>NUCLEOTIDE SEQUENCE [LARGE SCALE GENOMIC DNA]</scope>
    <source>
        <strain>APS</strain>
    </source>
</reference>
<feature type="chain" id="PRO_0000094070" description="Protein HflC">
    <location>
        <begin position="1"/>
        <end position="310"/>
    </location>
</feature>
<feature type="transmembrane region" description="Helical" evidence="2">
    <location>
        <begin position="3"/>
        <end position="23"/>
    </location>
</feature>
<evidence type="ECO:0000250" key="1"/>
<evidence type="ECO:0000255" key="2"/>
<evidence type="ECO:0000305" key="3"/>
<name>HFLC_BUCAI</name>
<comment type="function">
    <text evidence="1">HflC and HflK could regulate a protease.</text>
</comment>
<comment type="subunit">
    <text evidence="1">HflC and HflK may interact to form a multimeric complex.</text>
</comment>
<comment type="subcellular location">
    <subcellularLocation>
        <location evidence="3">Membrane</location>
        <topology evidence="3">Single-pass membrane protein</topology>
    </subcellularLocation>
</comment>
<comment type="similarity">
    <text evidence="3">Belongs to the band 7/mec-2 family. HflC subfamily.</text>
</comment>
<accession>P57630</accession>
<keyword id="KW-0472">Membrane</keyword>
<keyword id="KW-1185">Reference proteome</keyword>
<keyword id="KW-0812">Transmembrane</keyword>
<keyword id="KW-1133">Transmembrane helix</keyword>
<organism>
    <name type="scientific">Buchnera aphidicola subsp. Acyrthosiphon pisum (strain APS)</name>
    <name type="common">Acyrthosiphon pisum symbiotic bacterium</name>
    <dbReference type="NCBI Taxonomy" id="107806"/>
    <lineage>
        <taxon>Bacteria</taxon>
        <taxon>Pseudomonadati</taxon>
        <taxon>Pseudomonadota</taxon>
        <taxon>Gammaproteobacteria</taxon>
        <taxon>Enterobacterales</taxon>
        <taxon>Erwiniaceae</taxon>
        <taxon>Buchnera</taxon>
    </lineage>
</organism>
<sequence length="310" mass="35811">MNKILIFASSVLFLILSSSFFIVKEGERGIVLQFGKVLRNNELKTVVYNPGLHFKWPFLETVKMLDARIHTMDNQADRFVTKEKKDLIVDSYIKWRINDFSRYYLATGGGDVFQAEVLLKRKFSDRLRSEIGRLNVKEIVTDSRGRLTTDVLNSLNKGSMNLEKSSLINVNSMNALGIHVVDVRIKQINLPVEVSDAIYNRMRAEREAVARSQRSQGQEKAEKLRASADYKVSIILSEARKEALIIKGQGEAEVTKLFAKNFNKEPDFYFFIRSLRAYENSFKNNRNIMLIDSDSQFFRYIKNMINIKNL</sequence>
<proteinExistence type="inferred from homology"/>